<sequence length="185" mass="20655">MSNEVLTQTKERMEKAVAAYSRELASVRAGRANPSLLDKVTVEYYGAQTPLNQLSSINVPEARMLVVTPYDKTAIGDIEKAILKADLGVTPTSDGTIIRIAIPALTEERRKELVKVVKKYAEEAKVAVRNVRRDSNDDLKKLEKNGDITEDELRASSEDVQKLTDEYVSKIDSVTKDKEKEIMEV</sequence>
<organism>
    <name type="scientific">Bacillus velezensis (strain DSM 23117 / BGSC 10A6 / LMG 26770 / FZB42)</name>
    <name type="common">Bacillus amyloliquefaciens subsp. plantarum</name>
    <dbReference type="NCBI Taxonomy" id="326423"/>
    <lineage>
        <taxon>Bacteria</taxon>
        <taxon>Bacillati</taxon>
        <taxon>Bacillota</taxon>
        <taxon>Bacilli</taxon>
        <taxon>Bacillales</taxon>
        <taxon>Bacillaceae</taxon>
        <taxon>Bacillus</taxon>
        <taxon>Bacillus amyloliquefaciens group</taxon>
    </lineage>
</organism>
<dbReference type="EMBL" id="CP000560">
    <property type="protein sequence ID" value="ABS73999.1"/>
    <property type="molecule type" value="Genomic_DNA"/>
</dbReference>
<dbReference type="RefSeq" id="WP_003154212.1">
    <property type="nucleotide sequence ID" value="NC_009725.2"/>
</dbReference>
<dbReference type="SMR" id="A7Z4S3"/>
<dbReference type="GeneID" id="93080769"/>
<dbReference type="KEGG" id="bay:RBAM_016360"/>
<dbReference type="HOGENOM" id="CLU_073981_2_0_9"/>
<dbReference type="Proteomes" id="UP000001120">
    <property type="component" value="Chromosome"/>
</dbReference>
<dbReference type="GO" id="GO:0005737">
    <property type="term" value="C:cytoplasm"/>
    <property type="evidence" value="ECO:0007669"/>
    <property type="project" value="UniProtKB-SubCell"/>
</dbReference>
<dbReference type="GO" id="GO:0043023">
    <property type="term" value="F:ribosomal large subunit binding"/>
    <property type="evidence" value="ECO:0007669"/>
    <property type="project" value="TreeGrafter"/>
</dbReference>
<dbReference type="GO" id="GO:0006415">
    <property type="term" value="P:translational termination"/>
    <property type="evidence" value="ECO:0007669"/>
    <property type="project" value="UniProtKB-UniRule"/>
</dbReference>
<dbReference type="CDD" id="cd00520">
    <property type="entry name" value="RRF"/>
    <property type="match status" value="1"/>
</dbReference>
<dbReference type="FunFam" id="1.10.132.20:FF:000001">
    <property type="entry name" value="Ribosome-recycling factor"/>
    <property type="match status" value="1"/>
</dbReference>
<dbReference type="FunFam" id="3.30.1360.40:FF:000001">
    <property type="entry name" value="Ribosome-recycling factor"/>
    <property type="match status" value="1"/>
</dbReference>
<dbReference type="Gene3D" id="3.30.1360.40">
    <property type="match status" value="1"/>
</dbReference>
<dbReference type="Gene3D" id="1.10.132.20">
    <property type="entry name" value="Ribosome-recycling factor"/>
    <property type="match status" value="1"/>
</dbReference>
<dbReference type="HAMAP" id="MF_00040">
    <property type="entry name" value="RRF"/>
    <property type="match status" value="1"/>
</dbReference>
<dbReference type="InterPro" id="IPR002661">
    <property type="entry name" value="Ribosome_recyc_fac"/>
</dbReference>
<dbReference type="InterPro" id="IPR023584">
    <property type="entry name" value="Ribosome_recyc_fac_dom"/>
</dbReference>
<dbReference type="InterPro" id="IPR036191">
    <property type="entry name" value="RRF_sf"/>
</dbReference>
<dbReference type="NCBIfam" id="TIGR00496">
    <property type="entry name" value="frr"/>
    <property type="match status" value="1"/>
</dbReference>
<dbReference type="PANTHER" id="PTHR20982:SF3">
    <property type="entry name" value="MITOCHONDRIAL RIBOSOME RECYCLING FACTOR PSEUDO 1"/>
    <property type="match status" value="1"/>
</dbReference>
<dbReference type="PANTHER" id="PTHR20982">
    <property type="entry name" value="RIBOSOME RECYCLING FACTOR"/>
    <property type="match status" value="1"/>
</dbReference>
<dbReference type="Pfam" id="PF01765">
    <property type="entry name" value="RRF"/>
    <property type="match status" value="1"/>
</dbReference>
<dbReference type="SUPFAM" id="SSF55194">
    <property type="entry name" value="Ribosome recycling factor, RRF"/>
    <property type="match status" value="1"/>
</dbReference>
<keyword id="KW-0963">Cytoplasm</keyword>
<keyword id="KW-0648">Protein biosynthesis</keyword>
<evidence type="ECO:0000255" key="1">
    <source>
        <dbReference type="HAMAP-Rule" id="MF_00040"/>
    </source>
</evidence>
<evidence type="ECO:0000256" key="2">
    <source>
        <dbReference type="SAM" id="MobiDB-lite"/>
    </source>
</evidence>
<protein>
    <recommendedName>
        <fullName evidence="1">Ribosome-recycling factor</fullName>
        <shortName evidence="1">RRF</shortName>
    </recommendedName>
    <alternativeName>
        <fullName evidence="1">Ribosome-releasing factor</fullName>
    </alternativeName>
</protein>
<comment type="function">
    <text evidence="1">Responsible for the release of ribosomes from messenger RNA at the termination of protein biosynthesis. May increase the efficiency of translation by recycling ribosomes from one round of translation to another.</text>
</comment>
<comment type="subcellular location">
    <subcellularLocation>
        <location evidence="1">Cytoplasm</location>
    </subcellularLocation>
</comment>
<comment type="similarity">
    <text evidence="1">Belongs to the RRF family.</text>
</comment>
<name>RRF_BACVZ</name>
<accession>A7Z4S3</accession>
<gene>
    <name evidence="1" type="primary">frr</name>
    <name type="ordered locus">RBAM_016360</name>
</gene>
<reference key="1">
    <citation type="journal article" date="2007" name="Nat. Biotechnol.">
        <title>Comparative analysis of the complete genome sequence of the plant growth-promoting bacterium Bacillus amyloliquefaciens FZB42.</title>
        <authorList>
            <person name="Chen X.H."/>
            <person name="Koumoutsi A."/>
            <person name="Scholz R."/>
            <person name="Eisenreich A."/>
            <person name="Schneider K."/>
            <person name="Heinemeyer I."/>
            <person name="Morgenstern B."/>
            <person name="Voss B."/>
            <person name="Hess W.R."/>
            <person name="Reva O."/>
            <person name="Junge H."/>
            <person name="Voigt B."/>
            <person name="Jungblut P.R."/>
            <person name="Vater J."/>
            <person name="Suessmuth R."/>
            <person name="Liesegang H."/>
            <person name="Strittmatter A."/>
            <person name="Gottschalk G."/>
            <person name="Borriss R."/>
        </authorList>
    </citation>
    <scope>NUCLEOTIDE SEQUENCE [LARGE SCALE GENOMIC DNA]</scope>
    <source>
        <strain>DSM 23117 / BGSC 10A6 / LMG 26770 / FZB42</strain>
    </source>
</reference>
<proteinExistence type="inferred from homology"/>
<feature type="chain" id="PRO_1000003105" description="Ribosome-recycling factor">
    <location>
        <begin position="1"/>
        <end position="185"/>
    </location>
</feature>
<feature type="region of interest" description="Disordered" evidence="2">
    <location>
        <begin position="136"/>
        <end position="155"/>
    </location>
</feature>